<feature type="chain" id="PRO_0000375810" description="Lysophosphatidylserine lipase ABHD12">
    <location>
        <begin position="1"/>
        <end position="381"/>
    </location>
</feature>
<feature type="topological domain" description="Cytoplasmic" evidence="2">
    <location>
        <begin position="1"/>
        <end position="58"/>
    </location>
</feature>
<feature type="transmembrane region" description="Helical" evidence="2">
    <location>
        <begin position="59"/>
        <end position="79"/>
    </location>
</feature>
<feature type="topological domain" description="Extracellular" evidence="2">
    <location>
        <begin position="80"/>
        <end position="381"/>
    </location>
</feature>
<feature type="active site" description="Nucleophile" evidence="1">
    <location>
        <position position="229"/>
    </location>
</feature>
<feature type="active site" description="Charge relay system" evidence="1">
    <location>
        <position position="316"/>
    </location>
</feature>
<feature type="active site" description="Charge relay system" evidence="1">
    <location>
        <position position="355"/>
    </location>
</feature>
<feature type="glycosylation site" description="N-linked (GlcNAc...) asparagine" evidence="4">
    <location>
        <position position="106"/>
    </location>
</feature>
<gene>
    <name evidence="1" type="primary">ABHD12</name>
    <name evidence="5" type="ORF">RCJMB04_24m17</name>
</gene>
<reference key="1">
    <citation type="journal article" date="2005" name="Genome Biol.">
        <title>Full-length cDNAs from chicken bursal lymphocytes to facilitate gene function analysis.</title>
        <authorList>
            <person name="Caldwell R.B."/>
            <person name="Kierzek A.M."/>
            <person name="Arakawa H."/>
            <person name="Bezzubov Y."/>
            <person name="Zaim J."/>
            <person name="Fiedler P."/>
            <person name="Kutter S."/>
            <person name="Blagodatski A."/>
            <person name="Kostovska D."/>
            <person name="Koter M."/>
            <person name="Plachy J."/>
            <person name="Carninci P."/>
            <person name="Hayashizaki Y."/>
            <person name="Buerstedde J.-M."/>
        </authorList>
    </citation>
    <scope>NUCLEOTIDE SEQUENCE [LARGE SCALE MRNA]</scope>
    <source>
        <strain>CB</strain>
        <tissue>Bursa of Fabricius</tissue>
    </source>
</reference>
<proteinExistence type="evidence at transcript level"/>
<evidence type="ECO:0000250" key="1">
    <source>
        <dbReference type="UniProtKB" id="Q8N2K0"/>
    </source>
</evidence>
<evidence type="ECO:0000250" key="2">
    <source>
        <dbReference type="UniProtKB" id="Q99LR1"/>
    </source>
</evidence>
<evidence type="ECO:0000255" key="3"/>
<evidence type="ECO:0000255" key="4">
    <source>
        <dbReference type="PROSITE-ProRule" id="PRU00498"/>
    </source>
</evidence>
<evidence type="ECO:0000303" key="5">
    <source>
    </source>
</evidence>
<evidence type="ECO:0000305" key="6"/>
<name>ABD12_CHICK</name>
<comment type="function">
    <text evidence="1 2">Lysophosphatidylserine (LPS) lipase that mediates the hydrolysis of lysophosphatidylserine, a class of signaling lipids that regulates immunological and neurological processes (By similarity). Represents a major lysophosphatidylserine lipase in the brain, thereby playing a key role in the central nervous system (By similarity). Also able to hydrolyze oxidized phosphatidylserine; oxidized phosphatidylserine is produced in response to severe inflammatory stress and constitutes a proapoptotic 'eat me' signal. Also has monoacylglycerol (MAG) lipase activity: hydrolyzes 2-arachidonoylglycerol (2-AG), thereby acting as a regulator of endocannabinoid signaling pathways. Has a strong preference for very-long-chain lipid substrates; substrate specificity is likely due to improved catalysis and not improved substrate binding (By similarity).</text>
</comment>
<comment type="catalytic activity">
    <reaction evidence="1">
        <text>1-(9Z-octadecenoyl)-sn-glycero-3-phospho-L-serine + H2O = sn-glycero-3-phospho-L-serine + (9Z)-octadecenoate + H(+)</text>
        <dbReference type="Rhea" id="RHEA:40499"/>
        <dbReference type="ChEBI" id="CHEBI:15377"/>
        <dbReference type="ChEBI" id="CHEBI:15378"/>
        <dbReference type="ChEBI" id="CHEBI:30823"/>
        <dbReference type="ChEBI" id="CHEBI:64765"/>
        <dbReference type="ChEBI" id="CHEBI:74617"/>
    </reaction>
</comment>
<comment type="catalytic activity">
    <reaction evidence="2">
        <text>1-(9Z-octadecenoyl)-sn-glycero-3-phospho-(1'-sn-glycerol) + H2O = sn-glycero-3-phospho-(1'-sn-glycerol) + (9Z)-octadecenoate + H(+)</text>
        <dbReference type="Rhea" id="RHEA:44584"/>
        <dbReference type="ChEBI" id="CHEBI:15377"/>
        <dbReference type="ChEBI" id="CHEBI:15378"/>
        <dbReference type="ChEBI" id="CHEBI:30823"/>
        <dbReference type="ChEBI" id="CHEBI:64717"/>
        <dbReference type="ChEBI" id="CHEBI:72828"/>
    </reaction>
</comment>
<comment type="catalytic activity">
    <reaction evidence="2">
        <text>1-(9Z-octadecenoyl)-sn-glycero-3-phospho-(1D-myo-inositol) + H2O = sn-glycero-3-phospho-1D-myo-inositol + (9Z)-octadecenoate + H(+)</text>
        <dbReference type="Rhea" id="RHEA:44588"/>
        <dbReference type="ChEBI" id="CHEBI:15377"/>
        <dbReference type="ChEBI" id="CHEBI:15378"/>
        <dbReference type="ChEBI" id="CHEBI:30823"/>
        <dbReference type="ChEBI" id="CHEBI:58444"/>
        <dbReference type="ChEBI" id="CHEBI:78762"/>
    </reaction>
</comment>
<comment type="catalytic activity">
    <reaction evidence="2">
        <text>1-(9Z-octadecenoyl)-sn-glycero-3-phosphoethanolamine + H2O = sn-glycero-3-phosphoethanolamine + (9Z)-octadecenoate + H(+)</text>
        <dbReference type="Rhea" id="RHEA:40895"/>
        <dbReference type="ChEBI" id="CHEBI:15377"/>
        <dbReference type="ChEBI" id="CHEBI:15378"/>
        <dbReference type="ChEBI" id="CHEBI:30823"/>
        <dbReference type="ChEBI" id="CHEBI:74971"/>
        <dbReference type="ChEBI" id="CHEBI:143890"/>
    </reaction>
</comment>
<comment type="catalytic activity">
    <reaction evidence="2">
        <text>1-(9Z-octadecenoyl)-sn-glycero-3-phosphocholine + H2O = 1-(9Z-octadecenoyl)-sn-glycerol + phosphocholine + H(+)</text>
        <dbReference type="Rhea" id="RHEA:41091"/>
        <dbReference type="ChEBI" id="CHEBI:15377"/>
        <dbReference type="ChEBI" id="CHEBI:15378"/>
        <dbReference type="ChEBI" id="CHEBI:28610"/>
        <dbReference type="ChEBI" id="CHEBI:75757"/>
        <dbReference type="ChEBI" id="CHEBI:295975"/>
    </reaction>
</comment>
<comment type="catalytic activity">
    <reaction evidence="1">
        <text>2-(9Z-octadecenoyl)-glycerol + H2O = glycerol + (9Z)-octadecenoate + H(+)</text>
        <dbReference type="Rhea" id="RHEA:38491"/>
        <dbReference type="ChEBI" id="CHEBI:15377"/>
        <dbReference type="ChEBI" id="CHEBI:15378"/>
        <dbReference type="ChEBI" id="CHEBI:17754"/>
        <dbReference type="ChEBI" id="CHEBI:30823"/>
        <dbReference type="ChEBI" id="CHEBI:73990"/>
    </reaction>
</comment>
<comment type="catalytic activity">
    <reaction evidence="1">
        <text>1-hexadecanoyl-sn-glycero-3-phospho-L-serine + H2O = sn-glycero-3-phospho-L-serine + hexadecanoate + H(+)</text>
        <dbReference type="Rhea" id="RHEA:44552"/>
        <dbReference type="ChEBI" id="CHEBI:7896"/>
        <dbReference type="ChEBI" id="CHEBI:15377"/>
        <dbReference type="ChEBI" id="CHEBI:15378"/>
        <dbReference type="ChEBI" id="CHEBI:64765"/>
        <dbReference type="ChEBI" id="CHEBI:75020"/>
    </reaction>
</comment>
<comment type="catalytic activity">
    <reaction evidence="1">
        <text>2-(5Z,8Z,11Z,14Z-eicosatetraenoyl)-glycerol + H2O = glycerol + (5Z,8Z,11Z,14Z)-eicosatetraenoate + H(+)</text>
        <dbReference type="Rhea" id="RHEA:26132"/>
        <dbReference type="ChEBI" id="CHEBI:15377"/>
        <dbReference type="ChEBI" id="CHEBI:15378"/>
        <dbReference type="ChEBI" id="CHEBI:17754"/>
        <dbReference type="ChEBI" id="CHEBI:32395"/>
        <dbReference type="ChEBI" id="CHEBI:52392"/>
    </reaction>
</comment>
<comment type="catalytic activity">
    <reaction evidence="1">
        <text>Hydrolyzes glycerol monoesters of long-chain fatty acids.</text>
        <dbReference type="EC" id="3.1.1.23"/>
    </reaction>
</comment>
<comment type="catalytic activity">
    <reaction evidence="1">
        <text>1-decanoylglycerol + H2O = decanoate + glycerol + H(+)</text>
        <dbReference type="Rhea" id="RHEA:44320"/>
        <dbReference type="ChEBI" id="CHEBI:15377"/>
        <dbReference type="ChEBI" id="CHEBI:15378"/>
        <dbReference type="ChEBI" id="CHEBI:17754"/>
        <dbReference type="ChEBI" id="CHEBI:27689"/>
        <dbReference type="ChEBI" id="CHEBI:75547"/>
    </reaction>
</comment>
<comment type="catalytic activity">
    <reaction evidence="1">
        <text>1-dodecanoylglycerol + H2O = dodecanoate + glycerol + H(+)</text>
        <dbReference type="Rhea" id="RHEA:44316"/>
        <dbReference type="ChEBI" id="CHEBI:15377"/>
        <dbReference type="ChEBI" id="CHEBI:15378"/>
        <dbReference type="ChEBI" id="CHEBI:17754"/>
        <dbReference type="ChEBI" id="CHEBI:18262"/>
        <dbReference type="ChEBI" id="CHEBI:75539"/>
    </reaction>
</comment>
<comment type="catalytic activity">
    <reaction evidence="1">
        <text>1-tetradecanoylglycerol + H2O = tetradecanoate + glycerol + H(+)</text>
        <dbReference type="Rhea" id="RHEA:44312"/>
        <dbReference type="ChEBI" id="CHEBI:15377"/>
        <dbReference type="ChEBI" id="CHEBI:15378"/>
        <dbReference type="ChEBI" id="CHEBI:17754"/>
        <dbReference type="ChEBI" id="CHEBI:30807"/>
        <dbReference type="ChEBI" id="CHEBI:75562"/>
    </reaction>
</comment>
<comment type="catalytic activity">
    <reaction evidence="1">
        <text>2-hexadecanoylglycerol + H2O = glycerol + hexadecanoate + H(+)</text>
        <dbReference type="Rhea" id="RHEA:39963"/>
        <dbReference type="ChEBI" id="CHEBI:7896"/>
        <dbReference type="ChEBI" id="CHEBI:15377"/>
        <dbReference type="ChEBI" id="CHEBI:15378"/>
        <dbReference type="ChEBI" id="CHEBI:17754"/>
        <dbReference type="ChEBI" id="CHEBI:75455"/>
    </reaction>
</comment>
<comment type="catalytic activity">
    <reaction evidence="1">
        <text>1-(9Z-octadecenoyl)-glycerol + H2O = glycerol + (9Z)-octadecenoate + H(+)</text>
        <dbReference type="Rhea" id="RHEA:38487"/>
        <dbReference type="ChEBI" id="CHEBI:15377"/>
        <dbReference type="ChEBI" id="CHEBI:15378"/>
        <dbReference type="ChEBI" id="CHEBI:17754"/>
        <dbReference type="ChEBI" id="CHEBI:30823"/>
        <dbReference type="ChEBI" id="CHEBI:75342"/>
    </reaction>
</comment>
<comment type="catalytic activity">
    <reaction evidence="1">
        <text>2-(9Z,12Z-octadecadienoyl)-glycerol + H2O = (9Z,12Z)-octadecadienoate + glycerol + H(+)</text>
        <dbReference type="Rhea" id="RHEA:44732"/>
        <dbReference type="ChEBI" id="CHEBI:15377"/>
        <dbReference type="ChEBI" id="CHEBI:15378"/>
        <dbReference type="ChEBI" id="CHEBI:17754"/>
        <dbReference type="ChEBI" id="CHEBI:30245"/>
        <dbReference type="ChEBI" id="CHEBI:75457"/>
    </reaction>
</comment>
<comment type="catalytic activity">
    <reaction evidence="1">
        <text>1-(5Z,8Z,11Z,14Z-eicosatetraenoyl)-glycerol + H2O = glycerol + (5Z,8Z,11Z,14Z)-eicosatetraenoate + H(+)</text>
        <dbReference type="Rhea" id="RHEA:44728"/>
        <dbReference type="ChEBI" id="CHEBI:15377"/>
        <dbReference type="ChEBI" id="CHEBI:15378"/>
        <dbReference type="ChEBI" id="CHEBI:17754"/>
        <dbReference type="ChEBI" id="CHEBI:32395"/>
        <dbReference type="ChEBI" id="CHEBI:75612"/>
    </reaction>
</comment>
<comment type="catalytic activity">
    <reaction evidence="1">
        <text>1-(9Z,12Z-octadecadienoyl)-glycerol + H2O = (9Z,12Z)-octadecadienoate + glycerol + H(+)</text>
        <dbReference type="Rhea" id="RHEA:48428"/>
        <dbReference type="ChEBI" id="CHEBI:15377"/>
        <dbReference type="ChEBI" id="CHEBI:15378"/>
        <dbReference type="ChEBI" id="CHEBI:17754"/>
        <dbReference type="ChEBI" id="CHEBI:30245"/>
        <dbReference type="ChEBI" id="CHEBI:75568"/>
    </reaction>
</comment>
<comment type="catalytic activity">
    <reaction evidence="1">
        <text>1-hexadecanoylglycerol + H2O = glycerol + hexadecanoate + H(+)</text>
        <dbReference type="Rhea" id="RHEA:39959"/>
        <dbReference type="ChEBI" id="CHEBI:7896"/>
        <dbReference type="ChEBI" id="CHEBI:15377"/>
        <dbReference type="ChEBI" id="CHEBI:15378"/>
        <dbReference type="ChEBI" id="CHEBI:17754"/>
        <dbReference type="ChEBI" id="CHEBI:69081"/>
    </reaction>
</comment>
<comment type="catalytic activity">
    <reaction evidence="1">
        <text>1-octadecanoylglycerol + H2O = octadecanoate + glycerol + H(+)</text>
        <dbReference type="Rhea" id="RHEA:38363"/>
        <dbReference type="ChEBI" id="CHEBI:15377"/>
        <dbReference type="ChEBI" id="CHEBI:15378"/>
        <dbReference type="ChEBI" id="CHEBI:17754"/>
        <dbReference type="ChEBI" id="CHEBI:25629"/>
        <dbReference type="ChEBI" id="CHEBI:75555"/>
    </reaction>
</comment>
<comment type="catalytic activity">
    <reaction evidence="1">
        <text>1-octadecanoyl-2-(9,10-epoxyoctadecanoyl)-sn-glycero-3-phospho-L-serine + H2O = 9,10-epoxyoctadecanoate + 1-octadecanoyl-sn-glycero-3-phosphoserine + H(+)</text>
        <dbReference type="Rhea" id="RHEA:59364"/>
        <dbReference type="ChEBI" id="CHEBI:15377"/>
        <dbReference type="ChEBI" id="CHEBI:15378"/>
        <dbReference type="ChEBI" id="CHEBI:84467"/>
        <dbReference type="ChEBI" id="CHEBI:85195"/>
        <dbReference type="ChEBI" id="CHEBI:143087"/>
    </reaction>
</comment>
<comment type="catalytic activity">
    <reaction evidence="1">
        <text>1-octadecanoyl-2-(10-hydroxyoctadecanoyl)-sn-glycero-3-phospho-L-serine + H2O = 1-octadecanoyl-sn-glycero-3-phosphoserine + 10-hydroxyoctadecanoate + H(+)</text>
        <dbReference type="Rhea" id="RHEA:59368"/>
        <dbReference type="ChEBI" id="CHEBI:15377"/>
        <dbReference type="ChEBI" id="CHEBI:15378"/>
        <dbReference type="ChEBI" id="CHEBI:84467"/>
        <dbReference type="ChEBI" id="CHEBI:143088"/>
        <dbReference type="ChEBI" id="CHEBI:143089"/>
    </reaction>
</comment>
<comment type="catalytic activity">
    <reaction evidence="1">
        <text>1-hexadecanoyl-2-(10-hydroxyoctadecanoyl)-sn-glycero-3-phospho-L-serine + H2O = 10-hydroxyoctadecanoate + 1-hexadecanoyl-sn-glycero-3-phospho-L-serine + H(+)</text>
        <dbReference type="Rhea" id="RHEA:59372"/>
        <dbReference type="ChEBI" id="CHEBI:15377"/>
        <dbReference type="ChEBI" id="CHEBI:15378"/>
        <dbReference type="ChEBI" id="CHEBI:75020"/>
        <dbReference type="ChEBI" id="CHEBI:143089"/>
        <dbReference type="ChEBI" id="CHEBI:143094"/>
    </reaction>
</comment>
<comment type="subcellular location">
    <subcellularLocation>
        <location evidence="1">Endoplasmic reticulum membrane</location>
        <topology evidence="3">Single-pass membrane protein</topology>
    </subcellularLocation>
</comment>
<comment type="similarity">
    <text evidence="6">Belongs to the serine esterase family.</text>
</comment>
<organism>
    <name type="scientific">Gallus gallus</name>
    <name type="common">Chicken</name>
    <dbReference type="NCBI Taxonomy" id="9031"/>
    <lineage>
        <taxon>Eukaryota</taxon>
        <taxon>Metazoa</taxon>
        <taxon>Chordata</taxon>
        <taxon>Craniata</taxon>
        <taxon>Vertebrata</taxon>
        <taxon>Euteleostomi</taxon>
        <taxon>Archelosauria</taxon>
        <taxon>Archosauria</taxon>
        <taxon>Dinosauria</taxon>
        <taxon>Saurischia</taxon>
        <taxon>Theropoda</taxon>
        <taxon>Coelurosauria</taxon>
        <taxon>Aves</taxon>
        <taxon>Neognathae</taxon>
        <taxon>Galloanserae</taxon>
        <taxon>Galliformes</taxon>
        <taxon>Phasianidae</taxon>
        <taxon>Phasianinae</taxon>
        <taxon>Gallus</taxon>
    </lineage>
</organism>
<protein>
    <recommendedName>
        <fullName evidence="6">Lysophosphatidylserine lipase ABHD12</fullName>
        <ecNumber evidence="1">3.1.-.-</ecNumber>
    </recommendedName>
    <alternativeName>
        <fullName evidence="6">2-arachidonoylglycerol hydrolase ABHD12</fullName>
    </alternativeName>
    <alternativeName>
        <fullName evidence="6">Abhydrolase domain-containing protein 12</fullName>
    </alternativeName>
    <alternativeName>
        <fullName evidence="6">Monoacylglycerol lipase ABHD12</fullName>
        <ecNumber evidence="1">3.1.1.23</ecNumber>
    </alternativeName>
    <alternativeName>
        <fullName evidence="6">Oxidized phosphatidylserine lipase ABHD12</fullName>
        <ecNumber evidence="1">3.1.-.-</ecNumber>
    </alternativeName>
</protein>
<sequence>MRKRNESVTVEHERAAAAPAPLDKGCSLRHSLRLPAADTGMKRPLGRRHGLWFRLRRLIIWLLGVYIAIPFLVKLCPAIQAKLVFLNFVRVPYFIDLKRPQDQGLNHTCNYYLQPEEDVTIGVWHTVPAALWKNARGKDQLWFEDALGSSHPVILYLHGNAGTRGGDHRVELYKVLSSLGYHVVTFDYRGWGDSVGSPSERGMTYDALHVFDWIKARSGDNPVYIWGHSLGTGVATNLVRRLCERETPPEALILESPFTNIREEARSHPFSVIYRYFPGFDWFFLDPITTSGIKFANDENVKYISCSLLILHAEDDPVVPFHLGKKLYNIAATSRSFRDYKVQFVPFHTDLGYRHKYIYRSPELPRILREFLGIPEHEHHH</sequence>
<dbReference type="EC" id="3.1.-.-" evidence="1"/>
<dbReference type="EC" id="3.1.1.23" evidence="1"/>
<dbReference type="EMBL" id="AJ720754">
    <property type="protein sequence ID" value="CAG32413.1"/>
    <property type="molecule type" value="mRNA"/>
</dbReference>
<dbReference type="RefSeq" id="NP_001012889.1">
    <property type="nucleotide sequence ID" value="NM_001012871.2"/>
</dbReference>
<dbReference type="SMR" id="Q5ZIN0"/>
<dbReference type="FunCoup" id="Q5ZIN0">
    <property type="interactions" value="1478"/>
</dbReference>
<dbReference type="STRING" id="9031.ENSGALP00000013877"/>
<dbReference type="ESTHER" id="chick-q5zin0">
    <property type="family name" value="ABHD12-PHARC"/>
</dbReference>
<dbReference type="MEROPS" id="S09.939"/>
<dbReference type="GlyCosmos" id="Q5ZIN0">
    <property type="glycosylation" value="1 site, No reported glycans"/>
</dbReference>
<dbReference type="GlyGen" id="Q5ZIN0">
    <property type="glycosylation" value="1 site"/>
</dbReference>
<dbReference type="PaxDb" id="9031-ENSGALP00000013877"/>
<dbReference type="GeneID" id="421249"/>
<dbReference type="KEGG" id="gga:421249"/>
<dbReference type="CTD" id="26090"/>
<dbReference type="VEuPathDB" id="HostDB:geneid_421249"/>
<dbReference type="eggNOG" id="KOG1552">
    <property type="taxonomic scope" value="Eukaryota"/>
</dbReference>
<dbReference type="HOGENOM" id="CLU_029375_1_0_1"/>
<dbReference type="InParanoid" id="Q5ZIN0"/>
<dbReference type="OMA" id="YELHNCL"/>
<dbReference type="OrthoDB" id="10249433at2759"/>
<dbReference type="PhylomeDB" id="Q5ZIN0"/>
<dbReference type="Reactome" id="R-GGA-426048">
    <property type="pathway name" value="Arachidonate production from DAG"/>
</dbReference>
<dbReference type="PRO" id="PR:Q5ZIN0"/>
<dbReference type="Proteomes" id="UP000000539">
    <property type="component" value="Chromosome 3"/>
</dbReference>
<dbReference type="Bgee" id="ENSGALG00000008525">
    <property type="expression patterns" value="Expressed in cerebellum and 13 other cell types or tissues"/>
</dbReference>
<dbReference type="GO" id="GO:0005789">
    <property type="term" value="C:endoplasmic reticulum membrane"/>
    <property type="evidence" value="ECO:0000250"/>
    <property type="project" value="UniProtKB"/>
</dbReference>
<dbReference type="GO" id="GO:0016020">
    <property type="term" value="C:membrane"/>
    <property type="evidence" value="ECO:0000250"/>
    <property type="project" value="UniProtKB"/>
</dbReference>
<dbReference type="GO" id="GO:0004622">
    <property type="term" value="F:lysophospholipase activity"/>
    <property type="evidence" value="ECO:0000250"/>
    <property type="project" value="UniProtKB"/>
</dbReference>
<dbReference type="GO" id="GO:0047372">
    <property type="term" value="F:monoacylglycerol lipase activity"/>
    <property type="evidence" value="ECO:0000250"/>
    <property type="project" value="UniProtKB"/>
</dbReference>
<dbReference type="GO" id="GO:0004620">
    <property type="term" value="F:phospholipase activity"/>
    <property type="evidence" value="ECO:0000250"/>
    <property type="project" value="UniProtKB"/>
</dbReference>
<dbReference type="GO" id="GO:0046464">
    <property type="term" value="P:acylglycerol catabolic process"/>
    <property type="evidence" value="ECO:0000250"/>
    <property type="project" value="UniProtKB"/>
</dbReference>
<dbReference type="GO" id="GO:0052651">
    <property type="term" value="P:monoacylglycerol catabolic process"/>
    <property type="evidence" value="ECO:0000250"/>
    <property type="project" value="UniProtKB"/>
</dbReference>
<dbReference type="GO" id="GO:0006660">
    <property type="term" value="P:phosphatidylserine catabolic process"/>
    <property type="evidence" value="ECO:0000250"/>
    <property type="project" value="UniProtKB"/>
</dbReference>
<dbReference type="GO" id="GO:0009395">
    <property type="term" value="P:phospholipid catabolic process"/>
    <property type="evidence" value="ECO:0000250"/>
    <property type="project" value="UniProtKB"/>
</dbReference>
<dbReference type="FunFam" id="3.40.50.1820:FF:000069">
    <property type="entry name" value="monoacylglycerol lipase ABHD12"/>
    <property type="match status" value="1"/>
</dbReference>
<dbReference type="Gene3D" id="3.40.50.1820">
    <property type="entry name" value="alpha/beta hydrolase"/>
    <property type="match status" value="1"/>
</dbReference>
<dbReference type="InterPro" id="IPR000073">
    <property type="entry name" value="AB_hydrolase_1"/>
</dbReference>
<dbReference type="InterPro" id="IPR029058">
    <property type="entry name" value="AB_hydrolase_fold"/>
</dbReference>
<dbReference type="PANTHER" id="PTHR12277">
    <property type="entry name" value="ALPHA/BETA HYDROLASE DOMAIN-CONTAINING PROTEIN"/>
    <property type="match status" value="1"/>
</dbReference>
<dbReference type="PANTHER" id="PTHR12277:SF61">
    <property type="entry name" value="LYSOPHOSPHATIDYLSERINE LIPASE ABHD12"/>
    <property type="match status" value="1"/>
</dbReference>
<dbReference type="Pfam" id="PF00561">
    <property type="entry name" value="Abhydrolase_1"/>
    <property type="match status" value="1"/>
</dbReference>
<dbReference type="SUPFAM" id="SSF53474">
    <property type="entry name" value="alpha/beta-Hydrolases"/>
    <property type="match status" value="1"/>
</dbReference>
<keyword id="KW-0256">Endoplasmic reticulum</keyword>
<keyword id="KW-0325">Glycoprotein</keyword>
<keyword id="KW-0378">Hydrolase</keyword>
<keyword id="KW-0443">Lipid metabolism</keyword>
<keyword id="KW-0472">Membrane</keyword>
<keyword id="KW-1185">Reference proteome</keyword>
<keyword id="KW-0812">Transmembrane</keyword>
<keyword id="KW-1133">Transmembrane helix</keyword>
<accession>Q5ZIN0</accession>